<evidence type="ECO:0000255" key="1">
    <source>
        <dbReference type="HAMAP-Rule" id="MF_00412"/>
    </source>
</evidence>
<keyword id="KW-0028">Amino-acid biosynthesis</keyword>
<keyword id="KW-0963">Cytoplasm</keyword>
<keyword id="KW-0521">NADP</keyword>
<keyword id="KW-0560">Oxidoreductase</keyword>
<keyword id="KW-0641">Proline biosynthesis</keyword>
<keyword id="KW-1185">Reference proteome</keyword>
<sequence length="413" mass="42493">MAGMGRTAREGARALRLATPEQRTAAIQAMAVAIREDADAILTANAKDLARAEANGVSGPMLDRLALDAARLEGVAAGVEAVAAVPDPVGVATSRWTRPNGLDIARVRTPIGVIAMIYESRPNVTADAAALCVRSGNAVILRGGSECIHSNLAIHAAIARGLQKAGLPTAAVQAVKTPDRAAVGMILAGLDRTIDLIIPRGGKSLVARVQAEARAPVLGHLEGLNHVFVHAAADLKKAVEVVVNAKLRRVSVCGSAETLLIDQAAADKLLPPIADALIKAGCELRGDAAARAIEPTMKKATVEDWTTEYLAPILSVAVVDGVAGAARHIASYGSGHTDAIITEDAAAAEAFIAEVDSAIVLVNASTQFADGGEFGFGAEIGIATDKLHARGPVGAEQLTTFKYVVRGTGQTRP</sequence>
<proteinExistence type="inferred from homology"/>
<gene>
    <name evidence="1" type="primary">proA</name>
    <name type="ordered locus">CC_3430</name>
</gene>
<comment type="function">
    <text evidence="1">Catalyzes the NADPH-dependent reduction of L-glutamate 5-phosphate into L-glutamate 5-semialdehyde and phosphate. The product spontaneously undergoes cyclization to form 1-pyrroline-5-carboxylate.</text>
</comment>
<comment type="catalytic activity">
    <reaction evidence="1">
        <text>L-glutamate 5-semialdehyde + phosphate + NADP(+) = L-glutamyl 5-phosphate + NADPH + H(+)</text>
        <dbReference type="Rhea" id="RHEA:19541"/>
        <dbReference type="ChEBI" id="CHEBI:15378"/>
        <dbReference type="ChEBI" id="CHEBI:43474"/>
        <dbReference type="ChEBI" id="CHEBI:57783"/>
        <dbReference type="ChEBI" id="CHEBI:58066"/>
        <dbReference type="ChEBI" id="CHEBI:58274"/>
        <dbReference type="ChEBI" id="CHEBI:58349"/>
        <dbReference type="EC" id="1.2.1.41"/>
    </reaction>
</comment>
<comment type="pathway">
    <text evidence="1">Amino-acid biosynthesis; L-proline biosynthesis; L-glutamate 5-semialdehyde from L-glutamate: step 2/2.</text>
</comment>
<comment type="subcellular location">
    <subcellularLocation>
        <location evidence="1">Cytoplasm</location>
    </subcellularLocation>
</comment>
<comment type="similarity">
    <text evidence="1">Belongs to the gamma-glutamyl phosphate reductase family.</text>
</comment>
<feature type="chain" id="PRO_0000189711" description="Gamma-glutamyl phosphate reductase">
    <location>
        <begin position="1"/>
        <end position="413"/>
    </location>
</feature>
<protein>
    <recommendedName>
        <fullName evidence="1">Gamma-glutamyl phosphate reductase</fullName>
        <shortName evidence="1">GPR</shortName>
        <ecNumber evidence="1">1.2.1.41</ecNumber>
    </recommendedName>
    <alternativeName>
        <fullName evidence="1">Glutamate-5-semialdehyde dehydrogenase</fullName>
    </alternativeName>
    <alternativeName>
        <fullName evidence="1">Glutamyl-gamma-semialdehyde dehydrogenase</fullName>
        <shortName evidence="1">GSA dehydrogenase</shortName>
    </alternativeName>
</protein>
<dbReference type="EC" id="1.2.1.41" evidence="1"/>
<dbReference type="EMBL" id="AE005673">
    <property type="protein sequence ID" value="AAK25392.1"/>
    <property type="molecule type" value="Genomic_DNA"/>
</dbReference>
<dbReference type="PIR" id="D87674">
    <property type="entry name" value="D87674"/>
</dbReference>
<dbReference type="RefSeq" id="NP_422224.1">
    <property type="nucleotide sequence ID" value="NC_002696.2"/>
</dbReference>
<dbReference type="SMR" id="Q9A2X6"/>
<dbReference type="STRING" id="190650.CC_3430"/>
<dbReference type="EnsemblBacteria" id="AAK25392">
    <property type="protein sequence ID" value="AAK25392"/>
    <property type="gene ID" value="CC_3430"/>
</dbReference>
<dbReference type="KEGG" id="ccr:CC_3430"/>
<dbReference type="PATRIC" id="fig|190650.5.peg.3442"/>
<dbReference type="eggNOG" id="COG0014">
    <property type="taxonomic scope" value="Bacteria"/>
</dbReference>
<dbReference type="HOGENOM" id="CLU_030231_0_0_5"/>
<dbReference type="BioCyc" id="CAULO:CC3430-MONOMER"/>
<dbReference type="UniPathway" id="UPA00098">
    <property type="reaction ID" value="UER00360"/>
</dbReference>
<dbReference type="Proteomes" id="UP000001816">
    <property type="component" value="Chromosome"/>
</dbReference>
<dbReference type="GO" id="GO:0005737">
    <property type="term" value="C:cytoplasm"/>
    <property type="evidence" value="ECO:0007669"/>
    <property type="project" value="UniProtKB-SubCell"/>
</dbReference>
<dbReference type="GO" id="GO:0004350">
    <property type="term" value="F:glutamate-5-semialdehyde dehydrogenase activity"/>
    <property type="evidence" value="ECO:0007669"/>
    <property type="project" value="UniProtKB-UniRule"/>
</dbReference>
<dbReference type="GO" id="GO:0050661">
    <property type="term" value="F:NADP binding"/>
    <property type="evidence" value="ECO:0007669"/>
    <property type="project" value="InterPro"/>
</dbReference>
<dbReference type="GO" id="GO:0055129">
    <property type="term" value="P:L-proline biosynthetic process"/>
    <property type="evidence" value="ECO:0007669"/>
    <property type="project" value="UniProtKB-UniRule"/>
</dbReference>
<dbReference type="CDD" id="cd07079">
    <property type="entry name" value="ALDH_F18-19_ProA-GPR"/>
    <property type="match status" value="1"/>
</dbReference>
<dbReference type="FunFam" id="3.40.309.10:FF:000006">
    <property type="entry name" value="Gamma-glutamyl phosphate reductase"/>
    <property type="match status" value="1"/>
</dbReference>
<dbReference type="Gene3D" id="3.40.605.10">
    <property type="entry name" value="Aldehyde Dehydrogenase, Chain A, domain 1"/>
    <property type="match status" value="1"/>
</dbReference>
<dbReference type="Gene3D" id="3.40.309.10">
    <property type="entry name" value="Aldehyde Dehydrogenase, Chain A, domain 2"/>
    <property type="match status" value="1"/>
</dbReference>
<dbReference type="HAMAP" id="MF_00412">
    <property type="entry name" value="ProA"/>
    <property type="match status" value="1"/>
</dbReference>
<dbReference type="InterPro" id="IPR016161">
    <property type="entry name" value="Ald_DH/histidinol_DH"/>
</dbReference>
<dbReference type="InterPro" id="IPR016163">
    <property type="entry name" value="Ald_DH_C"/>
</dbReference>
<dbReference type="InterPro" id="IPR016162">
    <property type="entry name" value="Ald_DH_N"/>
</dbReference>
<dbReference type="InterPro" id="IPR015590">
    <property type="entry name" value="Aldehyde_DH_dom"/>
</dbReference>
<dbReference type="InterPro" id="IPR020593">
    <property type="entry name" value="G-glutamylP_reductase_CS"/>
</dbReference>
<dbReference type="InterPro" id="IPR012134">
    <property type="entry name" value="Glu-5-SA_DH"/>
</dbReference>
<dbReference type="InterPro" id="IPR000965">
    <property type="entry name" value="GPR_dom"/>
</dbReference>
<dbReference type="NCBIfam" id="NF001221">
    <property type="entry name" value="PRK00197.1"/>
    <property type="match status" value="1"/>
</dbReference>
<dbReference type="NCBIfam" id="TIGR00407">
    <property type="entry name" value="proA"/>
    <property type="match status" value="1"/>
</dbReference>
<dbReference type="PANTHER" id="PTHR11063:SF8">
    <property type="entry name" value="DELTA-1-PYRROLINE-5-CARBOXYLATE SYNTHASE"/>
    <property type="match status" value="1"/>
</dbReference>
<dbReference type="PANTHER" id="PTHR11063">
    <property type="entry name" value="GLUTAMATE SEMIALDEHYDE DEHYDROGENASE"/>
    <property type="match status" value="1"/>
</dbReference>
<dbReference type="Pfam" id="PF00171">
    <property type="entry name" value="Aldedh"/>
    <property type="match status" value="1"/>
</dbReference>
<dbReference type="PIRSF" id="PIRSF000151">
    <property type="entry name" value="GPR"/>
    <property type="match status" value="1"/>
</dbReference>
<dbReference type="SUPFAM" id="SSF53720">
    <property type="entry name" value="ALDH-like"/>
    <property type="match status" value="1"/>
</dbReference>
<dbReference type="PROSITE" id="PS01223">
    <property type="entry name" value="PROA"/>
    <property type="match status" value="1"/>
</dbReference>
<organism>
    <name type="scientific">Caulobacter vibrioides (strain ATCC 19089 / CIP 103742 / CB 15)</name>
    <name type="common">Caulobacter crescentus</name>
    <dbReference type="NCBI Taxonomy" id="190650"/>
    <lineage>
        <taxon>Bacteria</taxon>
        <taxon>Pseudomonadati</taxon>
        <taxon>Pseudomonadota</taxon>
        <taxon>Alphaproteobacteria</taxon>
        <taxon>Caulobacterales</taxon>
        <taxon>Caulobacteraceae</taxon>
        <taxon>Caulobacter</taxon>
    </lineage>
</organism>
<accession>Q9A2X6</accession>
<name>PROA_CAUVC</name>
<reference key="1">
    <citation type="journal article" date="2001" name="Proc. Natl. Acad. Sci. U.S.A.">
        <title>Complete genome sequence of Caulobacter crescentus.</title>
        <authorList>
            <person name="Nierman W.C."/>
            <person name="Feldblyum T.V."/>
            <person name="Laub M.T."/>
            <person name="Paulsen I.T."/>
            <person name="Nelson K.E."/>
            <person name="Eisen J.A."/>
            <person name="Heidelberg J.F."/>
            <person name="Alley M.R.K."/>
            <person name="Ohta N."/>
            <person name="Maddock J.R."/>
            <person name="Potocka I."/>
            <person name="Nelson W.C."/>
            <person name="Newton A."/>
            <person name="Stephens C."/>
            <person name="Phadke N.D."/>
            <person name="Ely B."/>
            <person name="DeBoy R.T."/>
            <person name="Dodson R.J."/>
            <person name="Durkin A.S."/>
            <person name="Gwinn M.L."/>
            <person name="Haft D.H."/>
            <person name="Kolonay J.F."/>
            <person name="Smit J."/>
            <person name="Craven M.B."/>
            <person name="Khouri H.M."/>
            <person name="Shetty J."/>
            <person name="Berry K.J."/>
            <person name="Utterback T.R."/>
            <person name="Tran K."/>
            <person name="Wolf A.M."/>
            <person name="Vamathevan J.J."/>
            <person name="Ermolaeva M.D."/>
            <person name="White O."/>
            <person name="Salzberg S.L."/>
            <person name="Venter J.C."/>
            <person name="Shapiro L."/>
            <person name="Fraser C.M."/>
        </authorList>
    </citation>
    <scope>NUCLEOTIDE SEQUENCE [LARGE SCALE GENOMIC DNA]</scope>
    <source>
        <strain>ATCC 19089 / CIP 103742 / CB 15</strain>
    </source>
</reference>